<comment type="function">
    <text evidence="1">Single-stranded DNA (ssDNA) metal-dependent exonuclease involved in mitochondrial genome maintenance. Has preference for 5'-3' exonuclease activity. Necessary for maintenance of proper 7S DNA levels. Probably involved in mitochondrial DNA (mtDNA) repair. Specifically binds 5-hydroxymethylcytosine (5hmC)-containing DNA in stem cells (By similarity).</text>
</comment>
<comment type="subcellular location">
    <subcellularLocation>
        <location evidence="2">Mitochondrion</location>
    </subcellularLocation>
</comment>
<comment type="miscellaneous">
    <text evidence="2">This protein may be expected to contain an N-terminal transit peptide but none has been predicted.</text>
</comment>
<comment type="similarity">
    <text evidence="2">Belongs to the MGME1 family.</text>
</comment>
<gene>
    <name type="primary">mgme1</name>
</gene>
<feature type="chain" id="PRO_0000421765" description="Mitochondrial genome maintenance exonuclease 1">
    <location>
        <begin position="1"/>
        <end position="347"/>
    </location>
</feature>
<feature type="active site" evidence="1">
    <location>
        <position position="246"/>
    </location>
</feature>
<feature type="active site" evidence="1">
    <location>
        <position position="259"/>
    </location>
</feature>
<feature type="active site" evidence="1">
    <location>
        <position position="261"/>
    </location>
</feature>
<evidence type="ECO:0000250" key="1"/>
<evidence type="ECO:0000255" key="2">
    <source>
        <dbReference type="HAMAP-Rule" id="MF_03030"/>
    </source>
</evidence>
<accession>F6SDF8</accession>
<accession>B1WAN8</accession>
<organism>
    <name type="scientific">Xenopus tropicalis</name>
    <name type="common">Western clawed frog</name>
    <name type="synonym">Silurana tropicalis</name>
    <dbReference type="NCBI Taxonomy" id="8364"/>
    <lineage>
        <taxon>Eukaryota</taxon>
        <taxon>Metazoa</taxon>
        <taxon>Chordata</taxon>
        <taxon>Craniata</taxon>
        <taxon>Vertebrata</taxon>
        <taxon>Euteleostomi</taxon>
        <taxon>Amphibia</taxon>
        <taxon>Batrachia</taxon>
        <taxon>Anura</taxon>
        <taxon>Pipoidea</taxon>
        <taxon>Pipidae</taxon>
        <taxon>Xenopodinae</taxon>
        <taxon>Xenopus</taxon>
        <taxon>Silurana</taxon>
    </lineage>
</organism>
<reference key="1">
    <citation type="journal article" date="2010" name="Science">
        <title>The genome of the Western clawed frog Xenopus tropicalis.</title>
        <authorList>
            <person name="Hellsten U."/>
            <person name="Harland R.M."/>
            <person name="Gilchrist M.J."/>
            <person name="Hendrix D."/>
            <person name="Jurka J."/>
            <person name="Kapitonov V."/>
            <person name="Ovcharenko I."/>
            <person name="Putnam N.H."/>
            <person name="Shu S."/>
            <person name="Taher L."/>
            <person name="Blitz I.L."/>
            <person name="Blumberg B."/>
            <person name="Dichmann D.S."/>
            <person name="Dubchak I."/>
            <person name="Amaya E."/>
            <person name="Detter J.C."/>
            <person name="Fletcher R."/>
            <person name="Gerhard D.S."/>
            <person name="Goodstein D."/>
            <person name="Graves T."/>
            <person name="Grigoriev I.V."/>
            <person name="Grimwood J."/>
            <person name="Kawashima T."/>
            <person name="Lindquist E."/>
            <person name="Lucas S.M."/>
            <person name="Mead P.E."/>
            <person name="Mitros T."/>
            <person name="Ogino H."/>
            <person name="Ohta Y."/>
            <person name="Poliakov A.V."/>
            <person name="Pollet N."/>
            <person name="Robert J."/>
            <person name="Salamov A."/>
            <person name="Sater A.K."/>
            <person name="Schmutz J."/>
            <person name="Terry A."/>
            <person name="Vize P.D."/>
            <person name="Warren W.C."/>
            <person name="Wells D."/>
            <person name="Wills A."/>
            <person name="Wilson R.K."/>
            <person name="Zimmerman L.B."/>
            <person name="Zorn A.M."/>
            <person name="Grainger R."/>
            <person name="Grammer T."/>
            <person name="Khokha M.K."/>
            <person name="Richardson P.M."/>
            <person name="Rokhsar D.S."/>
        </authorList>
    </citation>
    <scope>NUCLEOTIDE SEQUENCE [LARGE SCALE GENOMIC DNA]</scope>
</reference>
<reference key="2">
    <citation type="submission" date="2008-04" db="EMBL/GenBank/DDBJ databases">
        <authorList>
            <consortium name="NIH - Xenopus Gene Collection (XGC) project"/>
        </authorList>
    </citation>
    <scope>NUCLEOTIDE SEQUENCE [LARGE SCALE MRNA]</scope>
    <source>
        <tissue>Embryo</tissue>
    </source>
</reference>
<dbReference type="EC" id="3.1.-.-" evidence="2"/>
<dbReference type="EMBL" id="AAMC01103849">
    <property type="status" value="NOT_ANNOTATED_CDS"/>
    <property type="molecule type" value="Genomic_DNA"/>
</dbReference>
<dbReference type="EMBL" id="BC161444">
    <property type="protein sequence ID" value="AAI61444.1"/>
    <property type="molecule type" value="mRNA"/>
</dbReference>
<dbReference type="RefSeq" id="NP_001120532.1">
    <property type="nucleotide sequence ID" value="NM_001127060.1"/>
</dbReference>
<dbReference type="SMR" id="F6SDF8"/>
<dbReference type="FunCoup" id="F6SDF8">
    <property type="interactions" value="1570"/>
</dbReference>
<dbReference type="STRING" id="8364.ENSXETP00000048015"/>
<dbReference type="PaxDb" id="8364-ENSXETP00000030226"/>
<dbReference type="GeneID" id="100145685"/>
<dbReference type="KEGG" id="xtr:100145685"/>
<dbReference type="AGR" id="Xenbase:XB-GENE-1008562"/>
<dbReference type="CTD" id="92667"/>
<dbReference type="Xenbase" id="XB-GENE-1008562">
    <property type="gene designation" value="mgme1"/>
</dbReference>
<dbReference type="eggNOG" id="ENOG502QVKE">
    <property type="taxonomic scope" value="Eukaryota"/>
</dbReference>
<dbReference type="HOGENOM" id="CLU_068902_0_0_1"/>
<dbReference type="InParanoid" id="F6SDF8"/>
<dbReference type="OMA" id="DCVAKYQ"/>
<dbReference type="OrthoDB" id="5777131at2759"/>
<dbReference type="TreeFam" id="TF320375"/>
<dbReference type="Proteomes" id="UP000008143">
    <property type="component" value="Chromosome 5"/>
</dbReference>
<dbReference type="Bgee" id="ENSXETG00000013803">
    <property type="expression patterns" value="Expressed in egg cell and 11 other cell types or tissues"/>
</dbReference>
<dbReference type="GO" id="GO:0005739">
    <property type="term" value="C:mitochondrion"/>
    <property type="evidence" value="ECO:0007669"/>
    <property type="project" value="UniProtKB-SubCell"/>
</dbReference>
<dbReference type="GO" id="GO:0008297">
    <property type="term" value="F:single-stranded DNA exodeoxyribonuclease activity"/>
    <property type="evidence" value="ECO:0007669"/>
    <property type="project" value="UniProtKB-UniRule"/>
</dbReference>
<dbReference type="GO" id="GO:0043504">
    <property type="term" value="P:mitochondrial DNA repair"/>
    <property type="evidence" value="ECO:0007669"/>
    <property type="project" value="UniProtKB-UniRule"/>
</dbReference>
<dbReference type="FunFam" id="3.90.320.10:FF:000005">
    <property type="entry name" value="Mitochondrial genome maintenance exonuclease 1"/>
    <property type="match status" value="1"/>
</dbReference>
<dbReference type="Gene3D" id="3.90.320.10">
    <property type="match status" value="1"/>
</dbReference>
<dbReference type="HAMAP" id="MF_03030">
    <property type="entry name" value="MGME1"/>
    <property type="match status" value="1"/>
</dbReference>
<dbReference type="InterPro" id="IPR011604">
    <property type="entry name" value="PDDEXK-like_dom_sf"/>
</dbReference>
<dbReference type="PANTHER" id="PTHR31340">
    <property type="entry name" value="MITOCHONDRIAL GENOME MAINTENANCE EXONUCLEASE 1"/>
    <property type="match status" value="1"/>
</dbReference>
<dbReference type="PANTHER" id="PTHR31340:SF3">
    <property type="entry name" value="MITOCHONDRIAL GENOME MAINTENANCE EXONUCLEASE 1"/>
    <property type="match status" value="1"/>
</dbReference>
<keyword id="KW-0227">DNA damage</keyword>
<keyword id="KW-0234">DNA repair</keyword>
<keyword id="KW-0269">Exonuclease</keyword>
<keyword id="KW-0378">Hydrolase</keyword>
<keyword id="KW-0496">Mitochondrion</keyword>
<keyword id="KW-0540">Nuclease</keyword>
<keyword id="KW-1185">Reference proteome</keyword>
<protein>
    <recommendedName>
        <fullName evidence="2">Mitochondrial genome maintenance exonuclease 1</fullName>
        <ecNumber evidence="2">3.1.-.-</ecNumber>
    </recommendedName>
</protein>
<name>MGME1_XENTR</name>
<sequence length="347" mass="39949">MKPLQQIHLTCRRIIRDVLQHKSFLPAFISTSCTCLSRKKKHNGYDEVNQAKYEGLVRTVTASRISPQTPDRLFEEDNFLFGKVVKSKTATQTPEPKAPQNWVPLSNPNKVSLPLEKTDFDLPLKISLPARNHMANGTIPSVTRILQQTMPMEQAFYLERWKQRMIMELGEQGFAEYTAALFSQGKQFHMQLEDLLLALDHGKKEEPEGSTGYLSSVQHVLTDIIGVKSLESAVHHSELQYLGLVDCVAEYRQKLCVIDWKTSEKPKPYIRDTFDNPLQIAAYIGAINHDNNYNFQVNCGLIVVAYKDGSPAHTHFMDTDLCLHFWNKWLLRLEEYKKKKEEKEKQQ</sequence>
<proteinExistence type="evidence at transcript level"/>